<feature type="chain" id="PRO_1000089908" description="Phosphate acyltransferase">
    <location>
        <begin position="1"/>
        <end position="348"/>
    </location>
</feature>
<protein>
    <recommendedName>
        <fullName evidence="1">Phosphate acyltransferase</fullName>
        <ecNumber evidence="1">2.3.1.274</ecNumber>
    </recommendedName>
    <alternativeName>
        <fullName evidence="1">Acyl-ACP phosphotransacylase</fullName>
    </alternativeName>
    <alternativeName>
        <fullName evidence="1">Acyl-[acyl-carrier-protein]--phosphate acyltransferase</fullName>
    </alternativeName>
    <alternativeName>
        <fullName evidence="1">Phosphate-acyl-ACP acyltransferase</fullName>
    </alternativeName>
</protein>
<keyword id="KW-0963">Cytoplasm</keyword>
<keyword id="KW-0444">Lipid biosynthesis</keyword>
<keyword id="KW-0443">Lipid metabolism</keyword>
<keyword id="KW-0594">Phospholipid biosynthesis</keyword>
<keyword id="KW-1208">Phospholipid metabolism</keyword>
<keyword id="KW-0808">Transferase</keyword>
<name>PLSX_FRATM</name>
<reference key="1">
    <citation type="journal article" date="2009" name="PLoS Pathog.">
        <title>Molecular evolutionary consequences of niche restriction in Francisella tularensis, a facultative intracellular pathogen.</title>
        <authorList>
            <person name="Larsson P."/>
            <person name="Elfsmark D."/>
            <person name="Svensson K."/>
            <person name="Wikstroem P."/>
            <person name="Forsman M."/>
            <person name="Brettin T."/>
            <person name="Keim P."/>
            <person name="Johansson A."/>
        </authorList>
    </citation>
    <scope>NUCLEOTIDE SEQUENCE [LARGE SCALE GENOMIC DNA]</scope>
    <source>
        <strain>FSC147</strain>
    </source>
</reference>
<sequence>MGYKISIDAMGGDHGLNTTIPAALEAVKKDSNLQIVLVGDHHKIKRALDRYSKVKKIKLPVLQRIAIHHASETVGMDESPSIAVRKKKDSSMRVAINLVKDRTVDACVSAGNTGALMATSKFVLKTINGVDRPAIVYALPAFNRETKQLSKTYMLDLGANVVCTSEQLFQFAIMGSILAASSKGIAEPRVSLLNIGEEEMKGLDNIKNAAKLLQGCDFINYNGYIEGKYIFDDTTDVIVCDGFVGNVSLKTMEGSLRLIESLIKKTIQESSLLMKIPIVMALPIFKKMKKGMNLDSFNGASLLGLTGIVVKSHGGASANAFETAIYEAIKEIKYNIPKTIQESLEKVL</sequence>
<gene>
    <name evidence="1" type="primary">plsX</name>
    <name type="ordered locus">FTM_0651</name>
</gene>
<accession>B2SFU3</accession>
<evidence type="ECO:0000255" key="1">
    <source>
        <dbReference type="HAMAP-Rule" id="MF_00019"/>
    </source>
</evidence>
<organism>
    <name type="scientific">Francisella tularensis subsp. mediasiatica (strain FSC147)</name>
    <dbReference type="NCBI Taxonomy" id="441952"/>
    <lineage>
        <taxon>Bacteria</taxon>
        <taxon>Pseudomonadati</taxon>
        <taxon>Pseudomonadota</taxon>
        <taxon>Gammaproteobacteria</taxon>
        <taxon>Thiotrichales</taxon>
        <taxon>Francisellaceae</taxon>
        <taxon>Francisella</taxon>
    </lineage>
</organism>
<dbReference type="EC" id="2.3.1.274" evidence="1"/>
<dbReference type="EMBL" id="CP000915">
    <property type="protein sequence ID" value="ACD30636.1"/>
    <property type="molecule type" value="Genomic_DNA"/>
</dbReference>
<dbReference type="SMR" id="B2SFU3"/>
<dbReference type="KEGG" id="ftm:FTM_0651"/>
<dbReference type="HOGENOM" id="CLU_039379_1_0_6"/>
<dbReference type="UniPathway" id="UPA00085"/>
<dbReference type="GO" id="GO:0005737">
    <property type="term" value="C:cytoplasm"/>
    <property type="evidence" value="ECO:0007669"/>
    <property type="project" value="UniProtKB-SubCell"/>
</dbReference>
<dbReference type="GO" id="GO:0043811">
    <property type="term" value="F:phosphate:acyl-[acyl carrier protein] acyltransferase activity"/>
    <property type="evidence" value="ECO:0007669"/>
    <property type="project" value="UniProtKB-UniRule"/>
</dbReference>
<dbReference type="GO" id="GO:0006633">
    <property type="term" value="P:fatty acid biosynthetic process"/>
    <property type="evidence" value="ECO:0007669"/>
    <property type="project" value="UniProtKB-UniRule"/>
</dbReference>
<dbReference type="GO" id="GO:0008654">
    <property type="term" value="P:phospholipid biosynthetic process"/>
    <property type="evidence" value="ECO:0007669"/>
    <property type="project" value="UniProtKB-KW"/>
</dbReference>
<dbReference type="Gene3D" id="3.40.718.10">
    <property type="entry name" value="Isopropylmalate Dehydrogenase"/>
    <property type="match status" value="1"/>
</dbReference>
<dbReference type="HAMAP" id="MF_00019">
    <property type="entry name" value="PlsX"/>
    <property type="match status" value="1"/>
</dbReference>
<dbReference type="InterPro" id="IPR003664">
    <property type="entry name" value="FA_synthesis"/>
</dbReference>
<dbReference type="InterPro" id="IPR012281">
    <property type="entry name" value="Phospholipid_synth_PlsX-like"/>
</dbReference>
<dbReference type="NCBIfam" id="TIGR00182">
    <property type="entry name" value="plsX"/>
    <property type="match status" value="1"/>
</dbReference>
<dbReference type="PANTHER" id="PTHR30100">
    <property type="entry name" value="FATTY ACID/PHOSPHOLIPID SYNTHESIS PROTEIN PLSX"/>
    <property type="match status" value="1"/>
</dbReference>
<dbReference type="PANTHER" id="PTHR30100:SF1">
    <property type="entry name" value="PHOSPHATE ACYLTRANSFERASE"/>
    <property type="match status" value="1"/>
</dbReference>
<dbReference type="Pfam" id="PF02504">
    <property type="entry name" value="FA_synthesis"/>
    <property type="match status" value="1"/>
</dbReference>
<dbReference type="PIRSF" id="PIRSF002465">
    <property type="entry name" value="Phsphlp_syn_PlsX"/>
    <property type="match status" value="1"/>
</dbReference>
<dbReference type="SUPFAM" id="SSF53659">
    <property type="entry name" value="Isocitrate/Isopropylmalate dehydrogenase-like"/>
    <property type="match status" value="1"/>
</dbReference>
<proteinExistence type="inferred from homology"/>
<comment type="function">
    <text evidence="1">Catalyzes the reversible formation of acyl-phosphate (acyl-PO(4)) from acyl-[acyl-carrier-protein] (acyl-ACP). This enzyme utilizes acyl-ACP as fatty acyl donor, but not acyl-CoA.</text>
</comment>
<comment type="catalytic activity">
    <reaction evidence="1">
        <text>a fatty acyl-[ACP] + phosphate = an acyl phosphate + holo-[ACP]</text>
        <dbReference type="Rhea" id="RHEA:42292"/>
        <dbReference type="Rhea" id="RHEA-COMP:9685"/>
        <dbReference type="Rhea" id="RHEA-COMP:14125"/>
        <dbReference type="ChEBI" id="CHEBI:43474"/>
        <dbReference type="ChEBI" id="CHEBI:59918"/>
        <dbReference type="ChEBI" id="CHEBI:64479"/>
        <dbReference type="ChEBI" id="CHEBI:138651"/>
        <dbReference type="EC" id="2.3.1.274"/>
    </reaction>
</comment>
<comment type="pathway">
    <text evidence="1">Lipid metabolism; phospholipid metabolism.</text>
</comment>
<comment type="subunit">
    <text evidence="1">Homodimer. Probably interacts with PlsY.</text>
</comment>
<comment type="subcellular location">
    <subcellularLocation>
        <location evidence="1">Cytoplasm</location>
    </subcellularLocation>
    <text evidence="1">Associated with the membrane possibly through PlsY.</text>
</comment>
<comment type="similarity">
    <text evidence="1">Belongs to the PlsX family.</text>
</comment>